<evidence type="ECO:0000250" key="1"/>
<evidence type="ECO:0000255" key="2">
    <source>
        <dbReference type="PROSITE-ProRule" id="PRU10009"/>
    </source>
</evidence>
<evidence type="ECO:0000305" key="3"/>
<dbReference type="EC" id="1.2.1.13"/>
<dbReference type="EMBL" id="M14418">
    <property type="protein sequence ID" value="AAA34076.1"/>
    <property type="molecule type" value="mRNA"/>
</dbReference>
<dbReference type="PIR" id="B24430">
    <property type="entry name" value="B24430"/>
</dbReference>
<dbReference type="SMR" id="P09044"/>
<dbReference type="STRING" id="4097.P09044"/>
<dbReference type="PaxDb" id="4097-P09044"/>
<dbReference type="ProMEX" id="P09044"/>
<dbReference type="UniPathway" id="UPA00116"/>
<dbReference type="Proteomes" id="UP000084051">
    <property type="component" value="Unplaced"/>
</dbReference>
<dbReference type="GO" id="GO:0009507">
    <property type="term" value="C:chloroplast"/>
    <property type="evidence" value="ECO:0007669"/>
    <property type="project" value="UniProtKB-SubCell"/>
</dbReference>
<dbReference type="GO" id="GO:0004365">
    <property type="term" value="F:glyceraldehyde-3-phosphate dehydrogenase (NAD+) (phosphorylating) activity"/>
    <property type="evidence" value="ECO:0000318"/>
    <property type="project" value="GO_Central"/>
</dbReference>
<dbReference type="GO" id="GO:0047100">
    <property type="term" value="F:glyceraldehyde-3-phosphate dehydrogenase (NADP+) (phosphorylating) activity"/>
    <property type="evidence" value="ECO:0007669"/>
    <property type="project" value="UniProtKB-EC"/>
</dbReference>
<dbReference type="GO" id="GO:0051287">
    <property type="term" value="F:NAD binding"/>
    <property type="evidence" value="ECO:0000318"/>
    <property type="project" value="GO_Central"/>
</dbReference>
<dbReference type="GO" id="GO:0050661">
    <property type="term" value="F:NADP binding"/>
    <property type="evidence" value="ECO:0007669"/>
    <property type="project" value="InterPro"/>
</dbReference>
<dbReference type="GO" id="GO:0006006">
    <property type="term" value="P:glucose metabolic process"/>
    <property type="evidence" value="ECO:0000318"/>
    <property type="project" value="GO_Central"/>
</dbReference>
<dbReference type="GO" id="GO:0019253">
    <property type="term" value="P:reductive pentose-phosphate cycle"/>
    <property type="evidence" value="ECO:0007669"/>
    <property type="project" value="UniProtKB-UniPathway"/>
</dbReference>
<dbReference type="CDD" id="cd18126">
    <property type="entry name" value="GAPDH_I_C"/>
    <property type="match status" value="1"/>
</dbReference>
<dbReference type="CDD" id="cd05214">
    <property type="entry name" value="GAPDH_I_N"/>
    <property type="match status" value="1"/>
</dbReference>
<dbReference type="FunFam" id="3.30.360.10:FF:000002">
    <property type="entry name" value="Glyceraldehyde-3-phosphate dehydrogenase"/>
    <property type="match status" value="1"/>
</dbReference>
<dbReference type="FunFam" id="3.40.50.720:FF:000001">
    <property type="entry name" value="Glyceraldehyde-3-phosphate dehydrogenase"/>
    <property type="match status" value="1"/>
</dbReference>
<dbReference type="Gene3D" id="3.30.360.10">
    <property type="entry name" value="Dihydrodipicolinate Reductase, domain 2"/>
    <property type="match status" value="1"/>
</dbReference>
<dbReference type="Gene3D" id="3.40.50.720">
    <property type="entry name" value="NAD(P)-binding Rossmann-like Domain"/>
    <property type="match status" value="1"/>
</dbReference>
<dbReference type="InterPro" id="IPR020831">
    <property type="entry name" value="GlycerAld/Erythrose_P_DH"/>
</dbReference>
<dbReference type="InterPro" id="IPR020830">
    <property type="entry name" value="GlycerAld_3-P_DH_AS"/>
</dbReference>
<dbReference type="InterPro" id="IPR020829">
    <property type="entry name" value="GlycerAld_3-P_DH_cat"/>
</dbReference>
<dbReference type="InterPro" id="IPR020828">
    <property type="entry name" value="GlycerAld_3-P_DH_NAD(P)-bd"/>
</dbReference>
<dbReference type="InterPro" id="IPR006424">
    <property type="entry name" value="Glyceraldehyde-3-P_DH_1"/>
</dbReference>
<dbReference type="InterPro" id="IPR036291">
    <property type="entry name" value="NAD(P)-bd_dom_sf"/>
</dbReference>
<dbReference type="NCBIfam" id="TIGR01534">
    <property type="entry name" value="GAPDH-I"/>
    <property type="match status" value="1"/>
</dbReference>
<dbReference type="PANTHER" id="PTHR43148">
    <property type="entry name" value="GLYCERALDEHYDE-3-PHOSPHATE DEHYDROGENASE 2"/>
    <property type="match status" value="1"/>
</dbReference>
<dbReference type="Pfam" id="PF02800">
    <property type="entry name" value="Gp_dh_C"/>
    <property type="match status" value="1"/>
</dbReference>
<dbReference type="Pfam" id="PF00044">
    <property type="entry name" value="Gp_dh_N"/>
    <property type="match status" value="1"/>
</dbReference>
<dbReference type="PRINTS" id="PR00078">
    <property type="entry name" value="G3PDHDRGNASE"/>
</dbReference>
<dbReference type="SMART" id="SM00846">
    <property type="entry name" value="Gp_dh_N"/>
    <property type="match status" value="1"/>
</dbReference>
<dbReference type="SUPFAM" id="SSF55347">
    <property type="entry name" value="Glyceraldehyde-3-phosphate dehydrogenase-like, C-terminal domain"/>
    <property type="match status" value="1"/>
</dbReference>
<dbReference type="SUPFAM" id="SSF51735">
    <property type="entry name" value="NAD(P)-binding Rossmann-fold domains"/>
    <property type="match status" value="1"/>
</dbReference>
<dbReference type="PROSITE" id="PS00071">
    <property type="entry name" value="GAPDH"/>
    <property type="match status" value="1"/>
</dbReference>
<name>G3PB_TOBAC</name>
<organism>
    <name type="scientific">Nicotiana tabacum</name>
    <name type="common">Common tobacco</name>
    <dbReference type="NCBI Taxonomy" id="4097"/>
    <lineage>
        <taxon>Eukaryota</taxon>
        <taxon>Viridiplantae</taxon>
        <taxon>Streptophyta</taxon>
        <taxon>Embryophyta</taxon>
        <taxon>Tracheophyta</taxon>
        <taxon>Spermatophyta</taxon>
        <taxon>Magnoliopsida</taxon>
        <taxon>eudicotyledons</taxon>
        <taxon>Gunneridae</taxon>
        <taxon>Pentapetalae</taxon>
        <taxon>asterids</taxon>
        <taxon>lamiids</taxon>
        <taxon>Solanales</taxon>
        <taxon>Solanaceae</taxon>
        <taxon>Nicotianoideae</taxon>
        <taxon>Nicotianeae</taxon>
        <taxon>Nicotiana</taxon>
    </lineage>
</organism>
<protein>
    <recommendedName>
        <fullName>Glyceraldehyde-3-phosphate dehydrogenase B, chloroplastic</fullName>
        <ecNumber>1.2.1.13</ecNumber>
    </recommendedName>
    <alternativeName>
        <fullName>NADP-dependent glyceraldehydephosphate dehydrogenase subunit B</fullName>
    </alternativeName>
</protein>
<reference key="1">
    <citation type="journal article" date="1986" name="Cell">
        <title>Evidence in favor of the symbiotic origin of chloroplasts: primary structure and evolution of tobacco glyceraldehyde-3-phosphate dehydrogenases.</title>
        <authorList>
            <person name="Shih M.-C."/>
            <person name="Lazar G."/>
            <person name="Goodman H.M."/>
        </authorList>
    </citation>
    <scope>NUCLEOTIDE SEQUENCE [MRNA]</scope>
</reference>
<sequence length="438" mass="47470">CLSKKFEVAEFAGLRSSGCVTFSNKESSFFDVVSAQLTPKTTRSTPVKGETVAKLKVAINGFGRIGRNFLRCWHGRKDSPLDVVVVNDSGGVKNASHLLKYDSMLGTFKADVKIVDNETISVDGKHIKVVSSRDPLKLPWAELGIDIVIEGTGVFVDGPGAGKHIQAGAKKVIITAPAKGADIPTYVVGVNEQDYSHEVADIISNASCTTNCLAPFVKVMDEELGIVKGTMTTTHSYTGDQRLLDASHRDLRRARAAALNIVPTSTGAAKAVSLVLPQLKGKLNGIALRVPTPNVSVVDLVVNVAKKGITAEDVNAAFRKAADGPLKGVLAVCDEPLVSVDFRCSDVSSTIDSSLTMVMGDDMVKVVAWYDNEWGYSQRVVDLAHLVANNWPGSCSTRKWRSHWMSFARQILLMRNAKSMNNRFCYVSSFEMDDFRSQ</sequence>
<proteinExistence type="evidence at transcript level"/>
<gene>
    <name type="primary">GAPB</name>
</gene>
<comment type="catalytic activity">
    <reaction>
        <text>D-glyceraldehyde 3-phosphate + phosphate + NADP(+) = (2R)-3-phospho-glyceroyl phosphate + NADPH + H(+)</text>
        <dbReference type="Rhea" id="RHEA:10296"/>
        <dbReference type="ChEBI" id="CHEBI:15378"/>
        <dbReference type="ChEBI" id="CHEBI:43474"/>
        <dbReference type="ChEBI" id="CHEBI:57604"/>
        <dbReference type="ChEBI" id="CHEBI:57783"/>
        <dbReference type="ChEBI" id="CHEBI:58349"/>
        <dbReference type="ChEBI" id="CHEBI:59776"/>
        <dbReference type="EC" id="1.2.1.13"/>
    </reaction>
</comment>
<comment type="pathway">
    <text>Carbohydrate biosynthesis; Calvin cycle.</text>
</comment>
<comment type="subunit">
    <text evidence="1">Tetramer of either four A chains (GAPDH 2) or two A and two B chains (GAPDH 1).</text>
</comment>
<comment type="subcellular location">
    <subcellularLocation>
        <location evidence="1">Plastid</location>
        <location evidence="1">Chloroplast</location>
    </subcellularLocation>
</comment>
<comment type="miscellaneous">
    <text>Plants contain two types of GAPDH: cytosolic forms which participate in glycolysis and chloroplast forms which participate in photosynthesis. All the forms are encoded by distinct genes.</text>
</comment>
<comment type="similarity">
    <text evidence="3">Belongs to the glyceraldehyde-3-phosphate dehydrogenase family.</text>
</comment>
<keyword id="KW-0113">Calvin cycle</keyword>
<keyword id="KW-0150">Chloroplast</keyword>
<keyword id="KW-0521">NADP</keyword>
<keyword id="KW-0560">Oxidoreductase</keyword>
<keyword id="KW-0934">Plastid</keyword>
<keyword id="KW-1185">Reference proteome</keyword>
<keyword id="KW-0809">Transit peptide</keyword>
<feature type="transit peptide" description="Chloroplast">
    <location>
        <begin position="1" status="less than"/>
        <end position="53"/>
    </location>
</feature>
<feature type="chain" id="PRO_0000010428" description="Glyceraldehyde-3-phosphate dehydrogenase B, chloroplastic">
    <location>
        <begin position="54"/>
        <end position="438"/>
    </location>
</feature>
<feature type="active site" description="Nucleophile" evidence="2">
    <location>
        <position position="208"/>
    </location>
</feature>
<feature type="binding site" evidence="1">
    <location>
        <begin position="64"/>
        <end position="65"/>
    </location>
    <ligand>
        <name>NADP(+)</name>
        <dbReference type="ChEBI" id="CHEBI:58349"/>
    </ligand>
</feature>
<feature type="binding site" evidence="1">
    <location>
        <position position="88"/>
    </location>
    <ligand>
        <name>NADP(+)</name>
        <dbReference type="ChEBI" id="CHEBI:58349"/>
    </ligand>
</feature>
<feature type="binding site" evidence="1">
    <location>
        <position position="133"/>
    </location>
    <ligand>
        <name>NADP(+)</name>
        <dbReference type="ChEBI" id="CHEBI:58349"/>
    </ligand>
</feature>
<feature type="binding site" evidence="1">
    <location>
        <begin position="207"/>
        <end position="209"/>
    </location>
    <ligand>
        <name>D-glyceraldehyde 3-phosphate</name>
        <dbReference type="ChEBI" id="CHEBI:59776"/>
    </ligand>
</feature>
<feature type="binding site" evidence="1">
    <location>
        <position position="238"/>
    </location>
    <ligand>
        <name>D-glyceraldehyde 3-phosphate</name>
        <dbReference type="ChEBI" id="CHEBI:59776"/>
    </ligand>
</feature>
<feature type="binding site" evidence="1">
    <location>
        <position position="253"/>
    </location>
    <ligand>
        <name>D-glyceraldehyde 3-phosphate</name>
        <dbReference type="ChEBI" id="CHEBI:59776"/>
    </ligand>
</feature>
<feature type="binding site" evidence="1">
    <location>
        <begin position="266"/>
        <end position="267"/>
    </location>
    <ligand>
        <name>D-glyceraldehyde 3-phosphate</name>
        <dbReference type="ChEBI" id="CHEBI:59776"/>
    </ligand>
</feature>
<feature type="binding site" evidence="1">
    <location>
        <position position="289"/>
    </location>
    <ligand>
        <name>D-glyceraldehyde 3-phosphate</name>
        <dbReference type="ChEBI" id="CHEBI:59776"/>
    </ligand>
</feature>
<feature type="binding site" evidence="1">
    <location>
        <position position="372"/>
    </location>
    <ligand>
        <name>NADP(+)</name>
        <dbReference type="ChEBI" id="CHEBI:58349"/>
    </ligand>
</feature>
<feature type="site" description="Activates thiol group during catalysis" evidence="1">
    <location>
        <position position="235"/>
    </location>
</feature>
<feature type="non-terminal residue">
    <location>
        <position position="1"/>
    </location>
</feature>
<accession>P09044</accession>